<protein>
    <recommendedName>
        <fullName evidence="1">Glutamyl-tRNA(Gln) amidotransferase subunit A</fullName>
        <shortName evidence="1">Glu-ADT subunit A</shortName>
        <ecNumber evidence="1">6.3.5.7</ecNumber>
    </recommendedName>
</protein>
<reference key="1">
    <citation type="journal article" date="2006" name="J. Bacteriol.">
        <title>Comparative genomic evidence for a close relationship between the dimorphic prosthecate bacteria Hyphomonas neptunium and Caulobacter crescentus.</title>
        <authorList>
            <person name="Badger J.H."/>
            <person name="Hoover T.R."/>
            <person name="Brun Y.V."/>
            <person name="Weiner R.M."/>
            <person name="Laub M.T."/>
            <person name="Alexandre G."/>
            <person name="Mrazek J."/>
            <person name="Ren Q."/>
            <person name="Paulsen I.T."/>
            <person name="Nelson K.E."/>
            <person name="Khouri H.M."/>
            <person name="Radune D."/>
            <person name="Sosa J."/>
            <person name="Dodson R.J."/>
            <person name="Sullivan S.A."/>
            <person name="Rosovitz M.J."/>
            <person name="Madupu R."/>
            <person name="Brinkac L.M."/>
            <person name="Durkin A.S."/>
            <person name="Daugherty S.C."/>
            <person name="Kothari S.P."/>
            <person name="Giglio M.G."/>
            <person name="Zhou L."/>
            <person name="Haft D.H."/>
            <person name="Selengut J.D."/>
            <person name="Davidsen T.M."/>
            <person name="Yang Q."/>
            <person name="Zafar N."/>
            <person name="Ward N.L."/>
        </authorList>
    </citation>
    <scope>NUCLEOTIDE SEQUENCE [LARGE SCALE GENOMIC DNA]</scope>
    <source>
        <strain>ATCC 15444</strain>
    </source>
</reference>
<dbReference type="EC" id="6.3.5.7" evidence="1"/>
<dbReference type="EMBL" id="CP000158">
    <property type="protein sequence ID" value="ABI77610.1"/>
    <property type="molecule type" value="Genomic_DNA"/>
</dbReference>
<dbReference type="RefSeq" id="WP_011647286.1">
    <property type="nucleotide sequence ID" value="NC_008358.1"/>
</dbReference>
<dbReference type="SMR" id="Q0BZV5"/>
<dbReference type="STRING" id="228405.HNE_2293"/>
<dbReference type="KEGG" id="hne:HNE_2293"/>
<dbReference type="eggNOG" id="COG0154">
    <property type="taxonomic scope" value="Bacteria"/>
</dbReference>
<dbReference type="HOGENOM" id="CLU_009600_0_3_5"/>
<dbReference type="Proteomes" id="UP000001959">
    <property type="component" value="Chromosome"/>
</dbReference>
<dbReference type="GO" id="GO:0030956">
    <property type="term" value="C:glutamyl-tRNA(Gln) amidotransferase complex"/>
    <property type="evidence" value="ECO:0007669"/>
    <property type="project" value="InterPro"/>
</dbReference>
<dbReference type="GO" id="GO:0005524">
    <property type="term" value="F:ATP binding"/>
    <property type="evidence" value="ECO:0007669"/>
    <property type="project" value="UniProtKB-KW"/>
</dbReference>
<dbReference type="GO" id="GO:0050567">
    <property type="term" value="F:glutaminyl-tRNA synthase (glutamine-hydrolyzing) activity"/>
    <property type="evidence" value="ECO:0007669"/>
    <property type="project" value="UniProtKB-UniRule"/>
</dbReference>
<dbReference type="GO" id="GO:0006412">
    <property type="term" value="P:translation"/>
    <property type="evidence" value="ECO:0007669"/>
    <property type="project" value="UniProtKB-UniRule"/>
</dbReference>
<dbReference type="Gene3D" id="3.90.1300.10">
    <property type="entry name" value="Amidase signature (AS) domain"/>
    <property type="match status" value="1"/>
</dbReference>
<dbReference type="HAMAP" id="MF_00120">
    <property type="entry name" value="GatA"/>
    <property type="match status" value="1"/>
</dbReference>
<dbReference type="InterPro" id="IPR000120">
    <property type="entry name" value="Amidase"/>
</dbReference>
<dbReference type="InterPro" id="IPR020556">
    <property type="entry name" value="Amidase_CS"/>
</dbReference>
<dbReference type="InterPro" id="IPR023631">
    <property type="entry name" value="Amidase_dom"/>
</dbReference>
<dbReference type="InterPro" id="IPR036928">
    <property type="entry name" value="AS_sf"/>
</dbReference>
<dbReference type="InterPro" id="IPR004412">
    <property type="entry name" value="GatA"/>
</dbReference>
<dbReference type="NCBIfam" id="TIGR00132">
    <property type="entry name" value="gatA"/>
    <property type="match status" value="1"/>
</dbReference>
<dbReference type="PANTHER" id="PTHR11895:SF151">
    <property type="entry name" value="GLUTAMYL-TRNA(GLN) AMIDOTRANSFERASE SUBUNIT A"/>
    <property type="match status" value="1"/>
</dbReference>
<dbReference type="PANTHER" id="PTHR11895">
    <property type="entry name" value="TRANSAMIDASE"/>
    <property type="match status" value="1"/>
</dbReference>
<dbReference type="Pfam" id="PF01425">
    <property type="entry name" value="Amidase"/>
    <property type="match status" value="1"/>
</dbReference>
<dbReference type="SUPFAM" id="SSF75304">
    <property type="entry name" value="Amidase signature (AS) enzymes"/>
    <property type="match status" value="1"/>
</dbReference>
<dbReference type="PROSITE" id="PS00571">
    <property type="entry name" value="AMIDASES"/>
    <property type="match status" value="1"/>
</dbReference>
<keyword id="KW-0067">ATP-binding</keyword>
<keyword id="KW-0436">Ligase</keyword>
<keyword id="KW-0547">Nucleotide-binding</keyword>
<keyword id="KW-0648">Protein biosynthesis</keyword>
<keyword id="KW-1185">Reference proteome</keyword>
<feature type="chain" id="PRO_1000015841" description="Glutamyl-tRNA(Gln) amidotransferase subunit A">
    <location>
        <begin position="1"/>
        <end position="490"/>
    </location>
</feature>
<feature type="region of interest" description="Disordered" evidence="2">
    <location>
        <begin position="131"/>
        <end position="159"/>
    </location>
</feature>
<feature type="active site" description="Charge relay system" evidence="1">
    <location>
        <position position="78"/>
    </location>
</feature>
<feature type="active site" description="Charge relay system" evidence="1">
    <location>
        <position position="158"/>
    </location>
</feature>
<feature type="active site" description="Acyl-ester intermediate" evidence="1">
    <location>
        <position position="182"/>
    </location>
</feature>
<accession>Q0BZV5</accession>
<gene>
    <name evidence="1" type="primary">gatA</name>
    <name type="ordered locus">HNE_2293</name>
</gene>
<organism>
    <name type="scientific">Hyphomonas neptunium (strain ATCC 15444)</name>
    <dbReference type="NCBI Taxonomy" id="228405"/>
    <lineage>
        <taxon>Bacteria</taxon>
        <taxon>Pseudomonadati</taxon>
        <taxon>Pseudomonadota</taxon>
        <taxon>Alphaproteobacteria</taxon>
        <taxon>Hyphomonadales</taxon>
        <taxon>Hyphomonadaceae</taxon>
        <taxon>Hyphomonas</taxon>
    </lineage>
</organism>
<evidence type="ECO:0000255" key="1">
    <source>
        <dbReference type="HAMAP-Rule" id="MF_00120"/>
    </source>
</evidence>
<evidence type="ECO:0000256" key="2">
    <source>
        <dbReference type="SAM" id="MobiDB-lite"/>
    </source>
</evidence>
<name>GATA_HYPNA</name>
<comment type="function">
    <text evidence="1">Allows the formation of correctly charged Gln-tRNA(Gln) through the transamidation of misacylated Glu-tRNA(Gln) in organisms which lack glutaminyl-tRNA synthetase. The reaction takes place in the presence of glutamine and ATP through an activated gamma-phospho-Glu-tRNA(Gln).</text>
</comment>
<comment type="catalytic activity">
    <reaction evidence="1">
        <text>L-glutamyl-tRNA(Gln) + L-glutamine + ATP + H2O = L-glutaminyl-tRNA(Gln) + L-glutamate + ADP + phosphate + H(+)</text>
        <dbReference type="Rhea" id="RHEA:17521"/>
        <dbReference type="Rhea" id="RHEA-COMP:9681"/>
        <dbReference type="Rhea" id="RHEA-COMP:9684"/>
        <dbReference type="ChEBI" id="CHEBI:15377"/>
        <dbReference type="ChEBI" id="CHEBI:15378"/>
        <dbReference type="ChEBI" id="CHEBI:29985"/>
        <dbReference type="ChEBI" id="CHEBI:30616"/>
        <dbReference type="ChEBI" id="CHEBI:43474"/>
        <dbReference type="ChEBI" id="CHEBI:58359"/>
        <dbReference type="ChEBI" id="CHEBI:78520"/>
        <dbReference type="ChEBI" id="CHEBI:78521"/>
        <dbReference type="ChEBI" id="CHEBI:456216"/>
        <dbReference type="EC" id="6.3.5.7"/>
    </reaction>
</comment>
<comment type="subunit">
    <text evidence="1">Heterotrimer of A, B and C subunits.</text>
</comment>
<comment type="similarity">
    <text evidence="1">Belongs to the amidase family. GatA subfamily.</text>
</comment>
<sequence length="490" mass="52226">MTDLTDLTLAAALDGLKSKQFSSAEITGAFLQAMEKSRVLNAYVVETPEKAMEMARASDARIAKGEGGRLEGAPLGIKDLYCTKGVRTTACSNILGEFTPTYESTVTQNLWDEGAVMLGKLNMDEFAMGSSNETSRFGPPINPWRRKGDNAGLTPGGSSGGSAAAVSGNLCLAATASDTGGSIRQPASFTGTVGIKPTYGRASRYGMVAFASSLDQAGPIAKTVEDSALLLEIMCSHDPKDSTSLKVETPDWRSDVRKGVKGMKIGIPKEYRIEGLSEEIEALWQQGIAWLKAAGAEIVEISLPHTKYALPAYYIVAPAEASSNLARYDGMRYGARVEGNNLTQTYEASRASGFGKEVQRRLMIGTYVLSSGYYDAYYLRAQKVRAKIFQDFVGAFEQCDAILTPACPSTAFAFGEKSGDPLEMYLMDVFTVTANLAGLPGISVPAGLSASGLPLGLQVIGKALDESACFRVGGVLEDAASFVAKPDRWW</sequence>
<proteinExistence type="inferred from homology"/>